<geneLocation type="plasmid">
    <name>small</name>
</geneLocation>
<keyword id="KW-0614">Plasmid</keyword>
<dbReference type="EMBL" id="X51320">
    <property type="status" value="NOT_ANNOTATED_CDS"/>
    <property type="molecule type" value="Genomic_DNA"/>
</dbReference>
<dbReference type="PIR" id="S08038">
    <property type="entry name" value="S08038"/>
</dbReference>
<organism>
    <name type="scientific">Leptolyngbya boryana</name>
    <name type="common">Plectonema boryanum</name>
    <dbReference type="NCBI Taxonomy" id="1184"/>
    <lineage>
        <taxon>Bacteria</taxon>
        <taxon>Bacillati</taxon>
        <taxon>Cyanobacteriota</taxon>
        <taxon>Cyanophyceae</taxon>
        <taxon>Leptolyngbyales</taxon>
        <taxon>Leptolyngbyaceae</taxon>
        <taxon>Leptolyngbya group</taxon>
        <taxon>Leptolyngbya</taxon>
    </lineage>
</organism>
<feature type="chain" id="PRO_0000066412" description="Uncharacterized 4.6 kDa protein">
    <location>
        <begin position="1"/>
        <end position="40"/>
    </location>
</feature>
<accession>P15733</accession>
<protein>
    <recommendedName>
        <fullName>Uncharacterized 4.6 kDa protein</fullName>
    </recommendedName>
    <alternativeName>
        <fullName>ORF1</fullName>
    </alternativeName>
</protein>
<reference key="1">
    <citation type="submission" date="1989-01" db="EMBL/GenBank/DDBJ databases">
        <authorList>
            <person name="Wickrema A."/>
            <person name="Barnum S.R."/>
            <person name="Jaworski J.G."/>
        </authorList>
    </citation>
    <scope>NUCLEOTIDE SEQUENCE [GENOMIC DNA]</scope>
    <source>
        <strain>ATCC 27894 / CCAP 1463/1 / IAM M-101 / PCC 6306 / UTEX 581</strain>
    </source>
</reference>
<sequence>MLRWVREITGWMVWIPDKARYAGIRETSGCGLGGSPLWEI</sequence>
<proteinExistence type="predicted"/>
<name>YPS1_LEPBY</name>